<comment type="function">
    <text evidence="5">Sigma factors are initiation factors that promote the attachment of RNA polymerase to specific initiation sites and are then released. Extracytoplasmic function (ECF) sigma factors are held in an inactive form by a cognate anti-sigma factor (RshA) until released. This sigma factor is involved in heat shock and oxidative stress responses; it positively regulates the expression of itself, sigE, sigB and a number of transcriptional regulators as well as other effectors of heat and oxidative stress, leading to direct and indirect control of up to 25% of the bacterial genome. Modulates expression of host genes for intercrine beta (chemokine CC) and apoptosis, altering the host immune response.</text>
</comment>
<comment type="subunit">
    <text evidence="1">Interacts transiently with the RNA polymerase catalytic core formed by RpoA, RpoB, RpoC and RpoZ (2 alpha, 1 beta, 1 beta' and 1 omega subunit) to form the RNA polymerase holoenzyme that can initiate transcription.</text>
</comment>
<comment type="induction">
    <text evidence="4 5">Poorly expressed in exponential phase; induced by heat shock (20-fold, 45 degrees Celsius). Induced 10-fold by the thiol-oxidative agent diamide within 30 minutes of exposure, by 2 hours expression is again normal. Autoregulates its own expression, part of the sigH-rshA operon.</text>
</comment>
<comment type="domain">
    <text evidence="1">The sigma-70 factor domain-2 mediates sequence-specific interaction with the -10 element in promoter DNA, and plays an important role in melting the double-stranded DNA and the formation of the transcription bubble. The sigma-70 factor domain-2 mediates interaction with the RNA polymerase subunits RpoB and RpoC (By similarity).</text>
</comment>
<comment type="domain">
    <text>The sigma-70 factor domain-4 contains a helix-turn-helix (H-T-H) motif that mediates interaction with the -35 element in promoter DNA. The domain also mediates interaction with the RNA polymerase subunit RpoA. Interactions between sigma-70 factor domain-4 and anti-sigma factors prevents interaction of sigma factors with the RNA polymerase catalytic core.</text>
</comment>
<comment type="PTM">
    <text evidence="1">Phosphorylated, possibly on 2 residues, probably by PknB.</text>
</comment>
<comment type="disruption phenotype">
    <text evidence="4 6">Yields a delayed lung infection in mouse C57BL/6 or C3H infections, although bacterial burden remains wild-type (PubMed:12060776). Shows decreased bacterial burden 72 hours post-infection in rhesus monkey-derived macrophages and altered induction of host intercrine beta (chemokine CC) and apoptosis-related genes (PubMed:22235255).</text>
</comment>
<comment type="similarity">
    <text evidence="7">Belongs to the sigma-70 factor family. ECF subfamily.</text>
</comment>
<comment type="sequence caution" evidence="7">
    <conflict type="erroneous initiation">
        <sequence resource="EMBL-CDS" id="AAK47662"/>
    </conflict>
    <text>Extended N-terminus.</text>
</comment>
<dbReference type="EMBL" id="AE000516">
    <property type="protein sequence ID" value="AAK47662.1"/>
    <property type="status" value="ALT_INIT"/>
    <property type="molecule type" value="Genomic_DNA"/>
</dbReference>
<dbReference type="PIR" id="H70596">
    <property type="entry name" value="H70596"/>
</dbReference>
<dbReference type="RefSeq" id="WP_003416897.1">
    <property type="nucleotide sequence ID" value="NZ_KK341227.1"/>
</dbReference>
<dbReference type="SMR" id="P9WGH8"/>
<dbReference type="KEGG" id="mtc:MT3320"/>
<dbReference type="PATRIC" id="fig|83331.31.peg.3575"/>
<dbReference type="HOGENOM" id="CLU_047691_1_1_11"/>
<dbReference type="Proteomes" id="UP000001020">
    <property type="component" value="Chromosome"/>
</dbReference>
<dbReference type="GO" id="GO:0003677">
    <property type="term" value="F:DNA binding"/>
    <property type="evidence" value="ECO:0007669"/>
    <property type="project" value="UniProtKB-KW"/>
</dbReference>
<dbReference type="GO" id="GO:0016987">
    <property type="term" value="F:sigma factor activity"/>
    <property type="evidence" value="ECO:0007669"/>
    <property type="project" value="UniProtKB-KW"/>
</dbReference>
<dbReference type="GO" id="GO:0006352">
    <property type="term" value="P:DNA-templated transcription initiation"/>
    <property type="evidence" value="ECO:0007669"/>
    <property type="project" value="InterPro"/>
</dbReference>
<dbReference type="GO" id="GO:0006950">
    <property type="term" value="P:response to stress"/>
    <property type="evidence" value="ECO:0007669"/>
    <property type="project" value="UniProtKB-ARBA"/>
</dbReference>
<dbReference type="CDD" id="cd06171">
    <property type="entry name" value="Sigma70_r4"/>
    <property type="match status" value="1"/>
</dbReference>
<dbReference type="FunFam" id="1.10.10.10:FF:000068">
    <property type="entry name" value="RNA polymerase sigma factor"/>
    <property type="match status" value="1"/>
</dbReference>
<dbReference type="FunFam" id="1.10.1740.10:FF:000003">
    <property type="entry name" value="RNA polymerase sigma factor"/>
    <property type="match status" value="1"/>
</dbReference>
<dbReference type="Gene3D" id="1.10.1740.10">
    <property type="match status" value="1"/>
</dbReference>
<dbReference type="Gene3D" id="1.10.10.10">
    <property type="entry name" value="Winged helix-like DNA-binding domain superfamily/Winged helix DNA-binding domain"/>
    <property type="match status" value="1"/>
</dbReference>
<dbReference type="InterPro" id="IPR039425">
    <property type="entry name" value="RNA_pol_sigma-70-like"/>
</dbReference>
<dbReference type="InterPro" id="IPR014284">
    <property type="entry name" value="RNA_pol_sigma-70_dom"/>
</dbReference>
<dbReference type="InterPro" id="IPR014293">
    <property type="entry name" value="RNA_pol_sigma70_actinobac"/>
</dbReference>
<dbReference type="InterPro" id="IPR000838">
    <property type="entry name" value="RNA_pol_sigma70_ECF_CS"/>
</dbReference>
<dbReference type="InterPro" id="IPR007627">
    <property type="entry name" value="RNA_pol_sigma70_r2"/>
</dbReference>
<dbReference type="InterPro" id="IPR013249">
    <property type="entry name" value="RNA_pol_sigma70_r4_t2"/>
</dbReference>
<dbReference type="InterPro" id="IPR013325">
    <property type="entry name" value="RNA_pol_sigma_r2"/>
</dbReference>
<dbReference type="InterPro" id="IPR013324">
    <property type="entry name" value="RNA_pol_sigma_r3/r4-like"/>
</dbReference>
<dbReference type="InterPro" id="IPR036388">
    <property type="entry name" value="WH-like_DNA-bd_sf"/>
</dbReference>
<dbReference type="NCBIfam" id="TIGR02947">
    <property type="entry name" value="SigH_actino"/>
    <property type="match status" value="1"/>
</dbReference>
<dbReference type="NCBIfam" id="TIGR02937">
    <property type="entry name" value="sigma70-ECF"/>
    <property type="match status" value="1"/>
</dbReference>
<dbReference type="PANTHER" id="PTHR43133:SF59">
    <property type="entry name" value="ECF RNA POLYMERASE SIGMA FACTOR SIGR"/>
    <property type="match status" value="1"/>
</dbReference>
<dbReference type="PANTHER" id="PTHR43133">
    <property type="entry name" value="RNA POLYMERASE ECF-TYPE SIGMA FACTO"/>
    <property type="match status" value="1"/>
</dbReference>
<dbReference type="Pfam" id="PF04542">
    <property type="entry name" value="Sigma70_r2"/>
    <property type="match status" value="1"/>
</dbReference>
<dbReference type="Pfam" id="PF08281">
    <property type="entry name" value="Sigma70_r4_2"/>
    <property type="match status" value="1"/>
</dbReference>
<dbReference type="SUPFAM" id="SSF88946">
    <property type="entry name" value="Sigma2 domain of RNA polymerase sigma factors"/>
    <property type="match status" value="1"/>
</dbReference>
<dbReference type="SUPFAM" id="SSF88659">
    <property type="entry name" value="Sigma3 and sigma4 domains of RNA polymerase sigma factors"/>
    <property type="match status" value="1"/>
</dbReference>
<dbReference type="PROSITE" id="PS01063">
    <property type="entry name" value="SIGMA70_ECF"/>
    <property type="match status" value="1"/>
</dbReference>
<evidence type="ECO:0000250" key="1"/>
<evidence type="ECO:0000255" key="2"/>
<evidence type="ECO:0000256" key="3">
    <source>
        <dbReference type="SAM" id="MobiDB-lite"/>
    </source>
</evidence>
<evidence type="ECO:0000269" key="4">
    <source>
    </source>
</evidence>
<evidence type="ECO:0000269" key="5">
    <source>
    </source>
</evidence>
<evidence type="ECO:0000269" key="6">
    <source>
    </source>
</evidence>
<evidence type="ECO:0000305" key="7"/>
<keyword id="KW-0238">DNA-binding</keyword>
<keyword id="KW-0597">Phosphoprotein</keyword>
<keyword id="KW-1185">Reference proteome</keyword>
<keyword id="KW-0731">Sigma factor</keyword>
<keyword id="KW-0346">Stress response</keyword>
<keyword id="KW-0804">Transcription</keyword>
<keyword id="KW-0805">Transcription regulation</keyword>
<sequence>MADIDGVTGSAGLQPGPSEETDEELTARFERDAIPLLDQLYGGALRMTRNPADAEDLLQETMVKAYAGFRSFRHGTNLKAWLYRILTNTYINSYRKKQRQPAEYPTEQITDWQLASNAEHSSTGLRSAEVEALEALPDTEIKEALQALPEEFRMAVYYADVEGFPYKEIAEIMDTPIGTVMSRLHRGRRQLRGLLADVARDRGFARGEQAHEGVSS</sequence>
<name>SIGH_MYCTO</name>
<reference key="1">
    <citation type="journal article" date="2002" name="J. Bacteriol.">
        <title>Whole-genome comparison of Mycobacterium tuberculosis clinical and laboratory strains.</title>
        <authorList>
            <person name="Fleischmann R.D."/>
            <person name="Alland D."/>
            <person name="Eisen J.A."/>
            <person name="Carpenter L."/>
            <person name="White O."/>
            <person name="Peterson J.D."/>
            <person name="DeBoy R.T."/>
            <person name="Dodson R.J."/>
            <person name="Gwinn M.L."/>
            <person name="Haft D.H."/>
            <person name="Hickey E.K."/>
            <person name="Kolonay J.F."/>
            <person name="Nelson W.C."/>
            <person name="Umayam L.A."/>
            <person name="Ermolaeva M.D."/>
            <person name="Salzberg S.L."/>
            <person name="Delcher A."/>
            <person name="Utterback T.R."/>
            <person name="Weidman J.F."/>
            <person name="Khouri H.M."/>
            <person name="Gill J."/>
            <person name="Mikula A."/>
            <person name="Bishai W."/>
            <person name="Jacobs W.R. Jr."/>
            <person name="Venter J.C."/>
            <person name="Fraser C.M."/>
        </authorList>
    </citation>
    <scope>NUCLEOTIDE SEQUENCE [LARGE SCALE GENOMIC DNA]</scope>
    <source>
        <strain>CDC 1551 / Oshkosh</strain>
    </source>
</reference>
<reference key="2">
    <citation type="journal article" date="2002" name="Proc. Natl. Acad. Sci. U.S.A.">
        <title>Reduced immunopathology and mortality despite tissue persistence in a Mycobacterium tuberculosis mutant lacking alternative sigma factor, SigH.</title>
        <authorList>
            <person name="Kaushal D."/>
            <person name="Schroeder B.G."/>
            <person name="Tyagi S."/>
            <person name="Yoshimatsu T."/>
            <person name="Scott C."/>
            <person name="Ko C."/>
            <person name="Carpenter L."/>
            <person name="Mehrotra J."/>
            <person name="Manabe Y.C."/>
            <person name="Fleischmann R.D."/>
            <person name="Bishai W.R."/>
        </authorList>
    </citation>
    <scope>INDUCTION</scope>
    <scope>DISRUPTION PHENOTYPE</scope>
    <scope>REGULON</scope>
    <source>
        <strain>CDC 1551 / Oshkosh</strain>
    </source>
</reference>
<reference key="3">
    <citation type="journal article" date="2009" name="J. Bacteriol.">
        <title>Functional genomics reveals extended roles of the Mycobacterium tuberculosis stress response factor sigmaH.</title>
        <authorList>
            <person name="Mehra S."/>
            <person name="Kaushal D."/>
        </authorList>
    </citation>
    <scope>FUNCTION</scope>
    <scope>INDUCTION BY DIAMIDE</scope>
    <scope>REGULON</scope>
    <source>
        <strain>CDC 1551 / Oshkosh</strain>
    </source>
</reference>
<reference key="4">
    <citation type="journal article" date="2012" name="PLoS ONE">
        <title>The stress-response factor SigH modulates the interaction between Mycobacterium tuberculosis and host phagocytes.</title>
        <authorList>
            <person name="Dutta N.K."/>
            <person name="Mehra S."/>
            <person name="Martinez A.N."/>
            <person name="Alvarez X."/>
            <person name="Renner N.A."/>
            <person name="Morici L.A."/>
            <person name="Pahar B."/>
            <person name="Maclean A.G."/>
            <person name="Lackner A.A."/>
            <person name="Kaushal D."/>
        </authorList>
    </citation>
    <scope>DISRUPTION PHENOTYPE IN RHESUS MACAQUE MACROPHAGES</scope>
    <source>
        <strain>CDC 1551 / Oshkosh</strain>
    </source>
</reference>
<gene>
    <name type="primary">sigH</name>
    <name type="synonym">rpoE</name>
    <name type="ordered locus">MT3320</name>
</gene>
<accession>P9WGH8</accession>
<accession>L0TEP5</accession>
<accession>O05843</accession>
<accession>P66807</accession>
<organism>
    <name type="scientific">Mycobacterium tuberculosis (strain CDC 1551 / Oshkosh)</name>
    <dbReference type="NCBI Taxonomy" id="83331"/>
    <lineage>
        <taxon>Bacteria</taxon>
        <taxon>Bacillati</taxon>
        <taxon>Actinomycetota</taxon>
        <taxon>Actinomycetes</taxon>
        <taxon>Mycobacteriales</taxon>
        <taxon>Mycobacteriaceae</taxon>
        <taxon>Mycobacterium</taxon>
        <taxon>Mycobacterium tuberculosis complex</taxon>
    </lineage>
</organism>
<proteinExistence type="evidence at transcript level"/>
<protein>
    <recommendedName>
        <fullName>ECF RNA polymerase sigma factor SigH</fullName>
        <shortName>ECF sigma factor SigH</shortName>
    </recommendedName>
    <alternativeName>
        <fullName>Alternative RNA polymerase sigma factor SigH</fullName>
    </alternativeName>
    <alternativeName>
        <fullName>RNA polymerase sigma-H factor</fullName>
        <shortName>Sigma-H factor</shortName>
    </alternativeName>
</protein>
<feature type="chain" id="PRO_0000428359" description="ECF RNA polymerase sigma factor SigH">
    <location>
        <begin position="1"/>
        <end position="216"/>
    </location>
</feature>
<feature type="DNA-binding region" description="H-T-H motif" evidence="1">
    <location>
        <begin position="166"/>
        <end position="185"/>
    </location>
</feature>
<feature type="region of interest" description="Disordered" evidence="3">
    <location>
        <begin position="1"/>
        <end position="24"/>
    </location>
</feature>
<feature type="region of interest" description="Sigma-70 factor domain-2">
    <location>
        <begin position="37"/>
        <end position="99"/>
    </location>
</feature>
<feature type="region of interest" description="Sigma-70 factor domain-4">
    <location>
        <begin position="140"/>
        <end position="191"/>
    </location>
</feature>
<feature type="short sequence motif" description="Polymerase core binding" evidence="2">
    <location>
        <begin position="56"/>
        <end position="59"/>
    </location>
</feature>